<accession>B4SDX3</accession>
<evidence type="ECO:0000255" key="1">
    <source>
        <dbReference type="HAMAP-Rule" id="MF_00049"/>
    </source>
</evidence>
<protein>
    <recommendedName>
        <fullName evidence="1">Leucine--tRNA ligase</fullName>
        <ecNumber evidence="1">6.1.1.4</ecNumber>
    </recommendedName>
    <alternativeName>
        <fullName evidence="1">Leucyl-tRNA synthetase</fullName>
        <shortName evidence="1">LeuRS</shortName>
    </alternativeName>
</protein>
<name>SYL_PELPB</name>
<proteinExistence type="inferred from homology"/>
<reference key="1">
    <citation type="submission" date="2008-06" db="EMBL/GenBank/DDBJ databases">
        <title>Complete sequence of Pelodictyon phaeoclathratiforme BU-1.</title>
        <authorList>
            <consortium name="US DOE Joint Genome Institute"/>
            <person name="Lucas S."/>
            <person name="Copeland A."/>
            <person name="Lapidus A."/>
            <person name="Glavina del Rio T."/>
            <person name="Dalin E."/>
            <person name="Tice H."/>
            <person name="Bruce D."/>
            <person name="Goodwin L."/>
            <person name="Pitluck S."/>
            <person name="Schmutz J."/>
            <person name="Larimer F."/>
            <person name="Land M."/>
            <person name="Hauser L."/>
            <person name="Kyrpides N."/>
            <person name="Mikhailova N."/>
            <person name="Liu Z."/>
            <person name="Li T."/>
            <person name="Zhao F."/>
            <person name="Overmann J."/>
            <person name="Bryant D.A."/>
            <person name="Richardson P."/>
        </authorList>
    </citation>
    <scope>NUCLEOTIDE SEQUENCE [LARGE SCALE GENOMIC DNA]</scope>
    <source>
        <strain>DSM 5477 / BU-1</strain>
    </source>
</reference>
<sequence>MRYEFSKTEAKWQAWWKEQNTFKTGDDADKPKYYVLDMFPYPSGTGLHVGHLEGYTASDITARYKRSCGYNVLHPMGWDAFGLPAEQFAIKTGTHPKTTTEENIRNFKGTLQAMGFSYDWSREINTTDPHYFKWTQWIFLKLYERGLAYMSEVDVNWCEELKTVLANEEVDEKIADGYTVVRRPLRQWVLKITAYADRLLADLDELNWPENVKQMQRNWIGRSEGVEIDFELRCHNKKLRVYTTRPDTLFGATYLVISPEHPLAEKLATAQQLVEVKNYISKAKLKTELERTGLQKEKTGVFTGSYAINPATGEPLPVWISDFVLISYGTGAIMSVPAHDSRDWEFAKQYNLPIIEVIQSPHDVQERVFEEKESICVNSANNEITLNGLPFCEAFERMASWLETKKAGERKVNYKLRDWIFSRQRYWGEPIPIKHYHDGTLRLETALPLVLPEVEAYHPSSTGESPLANIPHWLYGSDEHGSFRRETNTMPQWAGSCWYYLRFIDPENQEKLVDPEKERYWMNVDLYIGGAEHAVLHLLYARFWHKVLFDLGVVSSREPFKKLFNQGMILGEDNEKMSKSRGNVIPADHVLERYGADAVRLYEMFLGPLEQVKPWNTNGIEGISRFLSKVWRLVYGEHEESATLLSEEAMPEELLRRMHKSIKKVGEDTEQLKFNTAISEMMVFVNELQKSGCKNRSAIETLLVLLSPYAPHITEELWESIGHNYSISQAPFPSFDPKLVEESILTIAVQINGKLRGTFLAPAKSPKELLLQEAKKTESVFKFLDGQTILREIVVVDKLVNFVVKKE</sequence>
<dbReference type="EC" id="6.1.1.4" evidence="1"/>
<dbReference type="EMBL" id="CP001110">
    <property type="protein sequence ID" value="ACF42964.1"/>
    <property type="molecule type" value="Genomic_DNA"/>
</dbReference>
<dbReference type="RefSeq" id="WP_012507459.1">
    <property type="nucleotide sequence ID" value="NC_011060.1"/>
</dbReference>
<dbReference type="SMR" id="B4SDX3"/>
<dbReference type="STRING" id="324925.Ppha_0665"/>
<dbReference type="KEGG" id="pph:Ppha_0665"/>
<dbReference type="eggNOG" id="COG0495">
    <property type="taxonomic scope" value="Bacteria"/>
</dbReference>
<dbReference type="HOGENOM" id="CLU_004427_0_0_10"/>
<dbReference type="OrthoDB" id="9810365at2"/>
<dbReference type="Proteomes" id="UP000002724">
    <property type="component" value="Chromosome"/>
</dbReference>
<dbReference type="GO" id="GO:0005829">
    <property type="term" value="C:cytosol"/>
    <property type="evidence" value="ECO:0007669"/>
    <property type="project" value="TreeGrafter"/>
</dbReference>
<dbReference type="GO" id="GO:0002161">
    <property type="term" value="F:aminoacyl-tRNA deacylase activity"/>
    <property type="evidence" value="ECO:0007669"/>
    <property type="project" value="InterPro"/>
</dbReference>
<dbReference type="GO" id="GO:0005524">
    <property type="term" value="F:ATP binding"/>
    <property type="evidence" value="ECO:0007669"/>
    <property type="project" value="UniProtKB-UniRule"/>
</dbReference>
<dbReference type="GO" id="GO:0004823">
    <property type="term" value="F:leucine-tRNA ligase activity"/>
    <property type="evidence" value="ECO:0007669"/>
    <property type="project" value="UniProtKB-UniRule"/>
</dbReference>
<dbReference type="GO" id="GO:0006429">
    <property type="term" value="P:leucyl-tRNA aminoacylation"/>
    <property type="evidence" value="ECO:0007669"/>
    <property type="project" value="UniProtKB-UniRule"/>
</dbReference>
<dbReference type="CDD" id="cd07958">
    <property type="entry name" value="Anticodon_Ia_Leu_BEm"/>
    <property type="match status" value="1"/>
</dbReference>
<dbReference type="CDD" id="cd00812">
    <property type="entry name" value="LeuRS_core"/>
    <property type="match status" value="1"/>
</dbReference>
<dbReference type="FunFam" id="3.40.50.620:FF:000056">
    <property type="entry name" value="Leucine--tRNA ligase"/>
    <property type="match status" value="1"/>
</dbReference>
<dbReference type="FunFam" id="3.40.50.620:FF:000077">
    <property type="entry name" value="Leucine--tRNA ligase"/>
    <property type="match status" value="1"/>
</dbReference>
<dbReference type="FunFam" id="1.10.730.10:FF:000011">
    <property type="entry name" value="Leucine--tRNA ligase chloroplastic/mitochondrial"/>
    <property type="match status" value="1"/>
</dbReference>
<dbReference type="Gene3D" id="3.10.20.590">
    <property type="match status" value="1"/>
</dbReference>
<dbReference type="Gene3D" id="3.40.50.620">
    <property type="entry name" value="HUPs"/>
    <property type="match status" value="2"/>
</dbReference>
<dbReference type="Gene3D" id="1.10.730.10">
    <property type="entry name" value="Isoleucyl-tRNA Synthetase, Domain 1"/>
    <property type="match status" value="1"/>
</dbReference>
<dbReference type="HAMAP" id="MF_00049_B">
    <property type="entry name" value="Leu_tRNA_synth_B"/>
    <property type="match status" value="1"/>
</dbReference>
<dbReference type="InterPro" id="IPR002300">
    <property type="entry name" value="aa-tRNA-synth_Ia"/>
</dbReference>
<dbReference type="InterPro" id="IPR002302">
    <property type="entry name" value="Leu-tRNA-ligase"/>
</dbReference>
<dbReference type="InterPro" id="IPR025709">
    <property type="entry name" value="Leu_tRNA-synth_edit"/>
</dbReference>
<dbReference type="InterPro" id="IPR013155">
    <property type="entry name" value="M/V/L/I-tRNA-synth_anticd-bd"/>
</dbReference>
<dbReference type="InterPro" id="IPR015413">
    <property type="entry name" value="Methionyl/Leucyl_tRNA_Synth"/>
</dbReference>
<dbReference type="InterPro" id="IPR014729">
    <property type="entry name" value="Rossmann-like_a/b/a_fold"/>
</dbReference>
<dbReference type="InterPro" id="IPR009080">
    <property type="entry name" value="tRNAsynth_Ia_anticodon-bd"/>
</dbReference>
<dbReference type="InterPro" id="IPR009008">
    <property type="entry name" value="Val/Leu/Ile-tRNA-synth_edit"/>
</dbReference>
<dbReference type="NCBIfam" id="TIGR00396">
    <property type="entry name" value="leuS_bact"/>
    <property type="match status" value="1"/>
</dbReference>
<dbReference type="PANTHER" id="PTHR43740:SF2">
    <property type="entry name" value="LEUCINE--TRNA LIGASE, MITOCHONDRIAL"/>
    <property type="match status" value="1"/>
</dbReference>
<dbReference type="PANTHER" id="PTHR43740">
    <property type="entry name" value="LEUCYL-TRNA SYNTHETASE"/>
    <property type="match status" value="1"/>
</dbReference>
<dbReference type="Pfam" id="PF08264">
    <property type="entry name" value="Anticodon_1"/>
    <property type="match status" value="1"/>
</dbReference>
<dbReference type="Pfam" id="PF00133">
    <property type="entry name" value="tRNA-synt_1"/>
    <property type="match status" value="1"/>
</dbReference>
<dbReference type="Pfam" id="PF13603">
    <property type="entry name" value="tRNA-synt_1_2"/>
    <property type="match status" value="1"/>
</dbReference>
<dbReference type="Pfam" id="PF09334">
    <property type="entry name" value="tRNA-synt_1g"/>
    <property type="match status" value="1"/>
</dbReference>
<dbReference type="PRINTS" id="PR00985">
    <property type="entry name" value="TRNASYNTHLEU"/>
</dbReference>
<dbReference type="SUPFAM" id="SSF47323">
    <property type="entry name" value="Anticodon-binding domain of a subclass of class I aminoacyl-tRNA synthetases"/>
    <property type="match status" value="1"/>
</dbReference>
<dbReference type="SUPFAM" id="SSF52374">
    <property type="entry name" value="Nucleotidylyl transferase"/>
    <property type="match status" value="1"/>
</dbReference>
<dbReference type="SUPFAM" id="SSF50677">
    <property type="entry name" value="ValRS/IleRS/LeuRS editing domain"/>
    <property type="match status" value="1"/>
</dbReference>
<gene>
    <name evidence="1" type="primary">leuS</name>
    <name type="ordered locus">Ppha_0665</name>
</gene>
<keyword id="KW-0030">Aminoacyl-tRNA synthetase</keyword>
<keyword id="KW-0067">ATP-binding</keyword>
<keyword id="KW-0963">Cytoplasm</keyword>
<keyword id="KW-0436">Ligase</keyword>
<keyword id="KW-0547">Nucleotide-binding</keyword>
<keyword id="KW-0648">Protein biosynthesis</keyword>
<keyword id="KW-1185">Reference proteome</keyword>
<feature type="chain" id="PRO_1000091341" description="Leucine--tRNA ligase">
    <location>
        <begin position="1"/>
        <end position="807"/>
    </location>
</feature>
<feature type="short sequence motif" description="'HIGH' region">
    <location>
        <begin position="40"/>
        <end position="51"/>
    </location>
</feature>
<feature type="short sequence motif" description="'KMSKS' region">
    <location>
        <begin position="576"/>
        <end position="580"/>
    </location>
</feature>
<feature type="binding site" evidence="1">
    <location>
        <position position="579"/>
    </location>
    <ligand>
        <name>ATP</name>
        <dbReference type="ChEBI" id="CHEBI:30616"/>
    </ligand>
</feature>
<organism>
    <name type="scientific">Pelodictyon phaeoclathratiforme (strain DSM 5477 / BU-1)</name>
    <dbReference type="NCBI Taxonomy" id="324925"/>
    <lineage>
        <taxon>Bacteria</taxon>
        <taxon>Pseudomonadati</taxon>
        <taxon>Chlorobiota</taxon>
        <taxon>Chlorobiia</taxon>
        <taxon>Chlorobiales</taxon>
        <taxon>Chlorobiaceae</taxon>
        <taxon>Chlorobium/Pelodictyon group</taxon>
        <taxon>Pelodictyon</taxon>
    </lineage>
</organism>
<comment type="catalytic activity">
    <reaction evidence="1">
        <text>tRNA(Leu) + L-leucine + ATP = L-leucyl-tRNA(Leu) + AMP + diphosphate</text>
        <dbReference type="Rhea" id="RHEA:11688"/>
        <dbReference type="Rhea" id="RHEA-COMP:9613"/>
        <dbReference type="Rhea" id="RHEA-COMP:9622"/>
        <dbReference type="ChEBI" id="CHEBI:30616"/>
        <dbReference type="ChEBI" id="CHEBI:33019"/>
        <dbReference type="ChEBI" id="CHEBI:57427"/>
        <dbReference type="ChEBI" id="CHEBI:78442"/>
        <dbReference type="ChEBI" id="CHEBI:78494"/>
        <dbReference type="ChEBI" id="CHEBI:456215"/>
        <dbReference type="EC" id="6.1.1.4"/>
    </reaction>
</comment>
<comment type="subcellular location">
    <subcellularLocation>
        <location evidence="1">Cytoplasm</location>
    </subcellularLocation>
</comment>
<comment type="similarity">
    <text evidence="1">Belongs to the class-I aminoacyl-tRNA synthetase family.</text>
</comment>